<keyword id="KW-0274">FAD</keyword>
<keyword id="KW-0285">Flavoprotein</keyword>
<keyword id="KW-0560">Oxidoreductase</keyword>
<keyword id="KW-1185">Reference proteome</keyword>
<keyword id="KW-0816">Tricarboxylic acid cycle</keyword>
<name>MQO_SYNS9</name>
<reference key="1">
    <citation type="submission" date="2005-08" db="EMBL/GenBank/DDBJ databases">
        <title>Complete sequence of Synechococcus sp. CC9902.</title>
        <authorList>
            <person name="Copeland A."/>
            <person name="Lucas S."/>
            <person name="Lapidus A."/>
            <person name="Barry K."/>
            <person name="Detter J.C."/>
            <person name="Glavina T."/>
            <person name="Hammon N."/>
            <person name="Israni S."/>
            <person name="Pitluck S."/>
            <person name="Martinez M."/>
            <person name="Schmutz J."/>
            <person name="Larimer F."/>
            <person name="Land M."/>
            <person name="Kyrpides N."/>
            <person name="Ivanova N."/>
            <person name="Richardson P."/>
        </authorList>
    </citation>
    <scope>NUCLEOTIDE SEQUENCE [LARGE SCALE GENOMIC DNA]</scope>
    <source>
        <strain>CC9902</strain>
    </source>
</reference>
<proteinExistence type="inferred from homology"/>
<organism>
    <name type="scientific">Synechococcus sp. (strain CC9902)</name>
    <dbReference type="NCBI Taxonomy" id="316279"/>
    <lineage>
        <taxon>Bacteria</taxon>
        <taxon>Bacillati</taxon>
        <taxon>Cyanobacteriota</taxon>
        <taxon>Cyanophyceae</taxon>
        <taxon>Synechococcales</taxon>
        <taxon>Synechococcaceae</taxon>
        <taxon>Synechococcus</taxon>
    </lineage>
</organism>
<feature type="chain" id="PRO_1000023817" description="Probable malate:quinone oxidoreductase">
    <location>
        <begin position="1"/>
        <end position="502"/>
    </location>
</feature>
<protein>
    <recommendedName>
        <fullName evidence="1">Probable malate:quinone oxidoreductase</fullName>
        <ecNumber evidence="1">1.1.5.4</ecNumber>
    </recommendedName>
    <alternativeName>
        <fullName evidence="1">MQO</fullName>
    </alternativeName>
    <alternativeName>
        <fullName evidence="1">Malate dehydrogenase [quinone]</fullName>
    </alternativeName>
</protein>
<dbReference type="EC" id="1.1.5.4" evidence="1"/>
<dbReference type="EMBL" id="CP000097">
    <property type="protein sequence ID" value="ABB26542.1"/>
    <property type="molecule type" value="Genomic_DNA"/>
</dbReference>
<dbReference type="RefSeq" id="WP_011360359.1">
    <property type="nucleotide sequence ID" value="NC_007513.1"/>
</dbReference>
<dbReference type="SMR" id="Q3AWX1"/>
<dbReference type="STRING" id="316279.Syncc9902_1584"/>
<dbReference type="KEGG" id="sye:Syncc9902_1584"/>
<dbReference type="eggNOG" id="COG0579">
    <property type="taxonomic scope" value="Bacteria"/>
</dbReference>
<dbReference type="HOGENOM" id="CLU_028151_0_0_3"/>
<dbReference type="OrthoDB" id="9763983at2"/>
<dbReference type="UniPathway" id="UPA00223">
    <property type="reaction ID" value="UER01008"/>
</dbReference>
<dbReference type="Proteomes" id="UP000002712">
    <property type="component" value="Chromosome"/>
</dbReference>
<dbReference type="GO" id="GO:0047545">
    <property type="term" value="F:2-hydroxyglutarate dehydrogenase activity"/>
    <property type="evidence" value="ECO:0007669"/>
    <property type="project" value="TreeGrafter"/>
</dbReference>
<dbReference type="GO" id="GO:0008924">
    <property type="term" value="F:L-malate dehydrogenase (quinone) activity"/>
    <property type="evidence" value="ECO:0007669"/>
    <property type="project" value="UniProtKB-UniRule"/>
</dbReference>
<dbReference type="GO" id="GO:0006099">
    <property type="term" value="P:tricarboxylic acid cycle"/>
    <property type="evidence" value="ECO:0007669"/>
    <property type="project" value="UniProtKB-UniRule"/>
</dbReference>
<dbReference type="Gene3D" id="3.30.9.10">
    <property type="entry name" value="D-Amino Acid Oxidase, subunit A, domain 2"/>
    <property type="match status" value="1"/>
</dbReference>
<dbReference type="Gene3D" id="3.50.50.60">
    <property type="entry name" value="FAD/NAD(P)-binding domain"/>
    <property type="match status" value="1"/>
</dbReference>
<dbReference type="HAMAP" id="MF_00212">
    <property type="entry name" value="MQO"/>
    <property type="match status" value="1"/>
</dbReference>
<dbReference type="InterPro" id="IPR036188">
    <property type="entry name" value="FAD/NAD-bd_sf"/>
</dbReference>
<dbReference type="InterPro" id="IPR006231">
    <property type="entry name" value="MQO"/>
</dbReference>
<dbReference type="NCBIfam" id="TIGR01320">
    <property type="entry name" value="mal_quin_oxido"/>
    <property type="match status" value="1"/>
</dbReference>
<dbReference type="NCBIfam" id="NF003606">
    <property type="entry name" value="PRK05257.2-1"/>
    <property type="match status" value="1"/>
</dbReference>
<dbReference type="NCBIfam" id="NF003607">
    <property type="entry name" value="PRK05257.2-3"/>
    <property type="match status" value="1"/>
</dbReference>
<dbReference type="NCBIfam" id="NF003611">
    <property type="entry name" value="PRK05257.3-2"/>
    <property type="match status" value="1"/>
</dbReference>
<dbReference type="PANTHER" id="PTHR43104">
    <property type="entry name" value="L-2-HYDROXYGLUTARATE DEHYDROGENASE, MITOCHONDRIAL"/>
    <property type="match status" value="1"/>
</dbReference>
<dbReference type="PANTHER" id="PTHR43104:SF2">
    <property type="entry name" value="L-2-HYDROXYGLUTARATE DEHYDROGENASE, MITOCHONDRIAL"/>
    <property type="match status" value="1"/>
</dbReference>
<dbReference type="Pfam" id="PF06039">
    <property type="entry name" value="Mqo"/>
    <property type="match status" value="1"/>
</dbReference>
<dbReference type="SUPFAM" id="SSF51905">
    <property type="entry name" value="FAD/NAD(P)-binding domain"/>
    <property type="match status" value="1"/>
</dbReference>
<accession>Q3AWX1</accession>
<comment type="catalytic activity">
    <reaction evidence="1">
        <text>(S)-malate + a quinone = a quinol + oxaloacetate</text>
        <dbReference type="Rhea" id="RHEA:46012"/>
        <dbReference type="ChEBI" id="CHEBI:15589"/>
        <dbReference type="ChEBI" id="CHEBI:16452"/>
        <dbReference type="ChEBI" id="CHEBI:24646"/>
        <dbReference type="ChEBI" id="CHEBI:132124"/>
        <dbReference type="EC" id="1.1.5.4"/>
    </reaction>
</comment>
<comment type="cofactor">
    <cofactor evidence="1">
        <name>FAD</name>
        <dbReference type="ChEBI" id="CHEBI:57692"/>
    </cofactor>
</comment>
<comment type="pathway">
    <text evidence="1">Carbohydrate metabolism; tricarboxylic acid cycle; oxaloacetate from (S)-malate (quinone route): step 1/1.</text>
</comment>
<comment type="similarity">
    <text evidence="1">Belongs to the MQO family.</text>
</comment>
<evidence type="ECO:0000255" key="1">
    <source>
        <dbReference type="HAMAP-Rule" id="MF_00212"/>
    </source>
</evidence>
<sequence>MQNDGTFDPEASYDAVLVGAGIMSATLAALLHELDPQLRLLLVERLEAPALESSAAVNNAGTGHAANCELNYTPMQPNGRVATDKAVAINAAFERSLEFWGSLLERGRLTSTDFLHRAAHISAVWSPANIAFLRQRFEQLKDIPAFAEMRWTEDRQDLAEWMPLVMEGRDPNQAVAATRIERGTDVDFGALTRAYLLPLQSSGALTVQYGTEVSNLKRLRRPNMTEGDWRVITKGPSGRREVRAPFVFLGAGGGALPLLQRSGIPEGDDFAGFPVSGLWLVCNDADLAEQQRAKVYGKAAVGAPPMSVPHLDTRWMDGRRSLLFGPFAGFSSKFLKQGSLLDLPASVRPTNLLPMLQVGATNIELVRYLINQLRQTPDQRFDALRDFLPTARQDDWSLSVAGQRVQIIKRSKEGGRLQLGTEVVAASDGSLAALLGASPGASTAVTIMLEVLQRCFPERLASADWQARLKALLPSFYSDPKSDPDVLKGMRERSDGLLGLSR</sequence>
<gene>
    <name evidence="1" type="primary">mqo</name>
    <name type="ordered locus">Syncc9902_1584</name>
</gene>